<feature type="chain" id="PRO_0000302714" description="ATP synthase subunit alpha">
    <location>
        <begin position="1"/>
        <end position="513"/>
    </location>
</feature>
<feature type="binding site" evidence="1">
    <location>
        <begin position="169"/>
        <end position="176"/>
    </location>
    <ligand>
        <name>ATP</name>
        <dbReference type="ChEBI" id="CHEBI:30616"/>
    </ligand>
</feature>
<feature type="site" description="Required for activity" evidence="1">
    <location>
        <position position="373"/>
    </location>
</feature>
<sequence length="513" mass="55794">MQLNAHEISDLIKKQIEGFDFTAEARTEGSVVSVSDGIVRIHGLGDVQFGEMIEFSNNTFGMALNLEQDSVGAVILGDYLHILEGDIVKCTNRLVEVPVGEAMLGRVVNPLGKAIDGKGDIDAQGVRPLEVMAPGVIDRKSVDQPIQTGIKAIDAMVPVGRGQRELIIGDRQTGKTAVAIDAIINQRDSGIRCVYVAIGQKDSSVATVVRKLEEYGALANTIIVVAGAAVSPALQYIAPYAGCAMAEYFRDRGEDVLIVYDDLTKQAWAYREVSLLLKRPPGREAYPGDVFYLHSRLLERASRVNADYVEKMTNGKVKGQTGSLTALPIIETQGGDVSAFVPTNVISITDGQIFLETDLFNAGIRPAINVGLSVSRVGGAAQTNIIKKLGGGIRLDLAQYRELVAFAQFSSDLDVETKAQIDRGQRVTELMKQNQYSPLSIAEMATLLFSANSGLLDDIEVNKIVDFEVSLIAYMKVNQVSLMNRINEIGNYNDKISNELQVAIDDFKTNYTW</sequence>
<reference key="1">
    <citation type="journal article" date="2007" name="Curr. Biol.">
        <title>Reduced genome of the thioautotrophic intracellular symbiont in a deep-sea clam, Calyptogena okutanii.</title>
        <authorList>
            <person name="Kuwahara H."/>
            <person name="Yoshida T."/>
            <person name="Takaki Y."/>
            <person name="Shimamura S."/>
            <person name="Nishi S."/>
            <person name="Harada M."/>
            <person name="Matsuyama K."/>
            <person name="Takishita K."/>
            <person name="Kawato M."/>
            <person name="Uematsu K."/>
            <person name="Fujiwara Y."/>
            <person name="Sato T."/>
            <person name="Kato C."/>
            <person name="Kitagawa M."/>
            <person name="Kato I."/>
            <person name="Maruyama T."/>
        </authorList>
    </citation>
    <scope>NUCLEOTIDE SEQUENCE [LARGE SCALE GENOMIC DNA]</scope>
    <source>
        <strain>HA</strain>
    </source>
</reference>
<comment type="function">
    <text evidence="1">Produces ATP from ADP in the presence of a proton gradient across the membrane. The alpha chain is a regulatory subunit.</text>
</comment>
<comment type="catalytic activity">
    <reaction evidence="1">
        <text>ATP + H2O + 4 H(+)(in) = ADP + phosphate + 5 H(+)(out)</text>
        <dbReference type="Rhea" id="RHEA:57720"/>
        <dbReference type="ChEBI" id="CHEBI:15377"/>
        <dbReference type="ChEBI" id="CHEBI:15378"/>
        <dbReference type="ChEBI" id="CHEBI:30616"/>
        <dbReference type="ChEBI" id="CHEBI:43474"/>
        <dbReference type="ChEBI" id="CHEBI:456216"/>
        <dbReference type="EC" id="7.1.2.2"/>
    </reaction>
</comment>
<comment type="subunit">
    <text evidence="1">F-type ATPases have 2 components, CF(1) - the catalytic core - and CF(0) - the membrane proton channel. CF(1) has five subunits: alpha(3), beta(3), gamma(1), delta(1), epsilon(1). CF(0) has three main subunits: a(1), b(2) and c(9-12). The alpha and beta chains form an alternating ring which encloses part of the gamma chain. CF(1) is attached to CF(0) by a central stalk formed by the gamma and epsilon chains, while a peripheral stalk is formed by the delta and b chains.</text>
</comment>
<comment type="subcellular location">
    <subcellularLocation>
        <location evidence="1">Cell inner membrane</location>
        <topology evidence="1">Peripheral membrane protein</topology>
    </subcellularLocation>
</comment>
<comment type="similarity">
    <text evidence="1">Belongs to the ATPase alpha/beta chains family.</text>
</comment>
<proteinExistence type="inferred from homology"/>
<organism>
    <name type="scientific">Vesicomyosocius okutanii subsp. Calyptogena okutanii (strain HA)</name>
    <dbReference type="NCBI Taxonomy" id="412965"/>
    <lineage>
        <taxon>Bacteria</taxon>
        <taxon>Pseudomonadati</taxon>
        <taxon>Pseudomonadota</taxon>
        <taxon>Gammaproteobacteria</taxon>
        <taxon>Candidatus Pseudothioglobaceae</taxon>
        <taxon>Candidatus Vesicomyosocius</taxon>
    </lineage>
</organism>
<gene>
    <name evidence="1" type="primary">atpA</name>
    <name type="ordered locus">COSY_0947</name>
</gene>
<dbReference type="EC" id="7.1.2.2" evidence="1"/>
<dbReference type="EMBL" id="AP009247">
    <property type="protein sequence ID" value="BAF62046.1"/>
    <property type="molecule type" value="Genomic_DNA"/>
</dbReference>
<dbReference type="RefSeq" id="WP_011930315.1">
    <property type="nucleotide sequence ID" value="NC_009465.1"/>
</dbReference>
<dbReference type="SMR" id="A5CVI8"/>
<dbReference type="STRING" id="412965.COSY_0947"/>
<dbReference type="KEGG" id="vok:COSY_0947"/>
<dbReference type="eggNOG" id="COG0056">
    <property type="taxonomic scope" value="Bacteria"/>
</dbReference>
<dbReference type="HOGENOM" id="CLU_010091_2_1_6"/>
<dbReference type="OrthoDB" id="9803053at2"/>
<dbReference type="Proteomes" id="UP000000247">
    <property type="component" value="Chromosome"/>
</dbReference>
<dbReference type="GO" id="GO:0005886">
    <property type="term" value="C:plasma membrane"/>
    <property type="evidence" value="ECO:0007669"/>
    <property type="project" value="UniProtKB-SubCell"/>
</dbReference>
<dbReference type="GO" id="GO:0045259">
    <property type="term" value="C:proton-transporting ATP synthase complex"/>
    <property type="evidence" value="ECO:0007669"/>
    <property type="project" value="UniProtKB-KW"/>
</dbReference>
<dbReference type="GO" id="GO:0043531">
    <property type="term" value="F:ADP binding"/>
    <property type="evidence" value="ECO:0007669"/>
    <property type="project" value="TreeGrafter"/>
</dbReference>
<dbReference type="GO" id="GO:0005524">
    <property type="term" value="F:ATP binding"/>
    <property type="evidence" value="ECO:0007669"/>
    <property type="project" value="UniProtKB-UniRule"/>
</dbReference>
<dbReference type="GO" id="GO:0046933">
    <property type="term" value="F:proton-transporting ATP synthase activity, rotational mechanism"/>
    <property type="evidence" value="ECO:0007669"/>
    <property type="project" value="UniProtKB-UniRule"/>
</dbReference>
<dbReference type="CDD" id="cd18113">
    <property type="entry name" value="ATP-synt_F1_alpha_C"/>
    <property type="match status" value="1"/>
</dbReference>
<dbReference type="CDD" id="cd18116">
    <property type="entry name" value="ATP-synt_F1_alpha_N"/>
    <property type="match status" value="1"/>
</dbReference>
<dbReference type="CDD" id="cd01132">
    <property type="entry name" value="F1-ATPase_alpha_CD"/>
    <property type="match status" value="1"/>
</dbReference>
<dbReference type="FunFam" id="1.20.150.20:FF:000001">
    <property type="entry name" value="ATP synthase subunit alpha"/>
    <property type="match status" value="1"/>
</dbReference>
<dbReference type="FunFam" id="2.40.30.20:FF:000001">
    <property type="entry name" value="ATP synthase subunit alpha"/>
    <property type="match status" value="1"/>
</dbReference>
<dbReference type="FunFam" id="3.40.50.300:FF:000002">
    <property type="entry name" value="ATP synthase subunit alpha"/>
    <property type="match status" value="1"/>
</dbReference>
<dbReference type="Gene3D" id="2.40.30.20">
    <property type="match status" value="1"/>
</dbReference>
<dbReference type="Gene3D" id="1.20.150.20">
    <property type="entry name" value="ATP synthase alpha/beta chain, C-terminal domain"/>
    <property type="match status" value="1"/>
</dbReference>
<dbReference type="Gene3D" id="3.40.50.300">
    <property type="entry name" value="P-loop containing nucleotide triphosphate hydrolases"/>
    <property type="match status" value="1"/>
</dbReference>
<dbReference type="HAMAP" id="MF_01346">
    <property type="entry name" value="ATP_synth_alpha_bact"/>
    <property type="match status" value="1"/>
</dbReference>
<dbReference type="InterPro" id="IPR023366">
    <property type="entry name" value="ATP_synth_asu-like_sf"/>
</dbReference>
<dbReference type="InterPro" id="IPR000793">
    <property type="entry name" value="ATP_synth_asu_C"/>
</dbReference>
<dbReference type="InterPro" id="IPR038376">
    <property type="entry name" value="ATP_synth_asu_C_sf"/>
</dbReference>
<dbReference type="InterPro" id="IPR033732">
    <property type="entry name" value="ATP_synth_F1_a_nt-bd_dom"/>
</dbReference>
<dbReference type="InterPro" id="IPR005294">
    <property type="entry name" value="ATP_synth_F1_asu"/>
</dbReference>
<dbReference type="InterPro" id="IPR020003">
    <property type="entry name" value="ATPase_a/bsu_AS"/>
</dbReference>
<dbReference type="InterPro" id="IPR004100">
    <property type="entry name" value="ATPase_F1/V1/A1_a/bsu_N"/>
</dbReference>
<dbReference type="InterPro" id="IPR036121">
    <property type="entry name" value="ATPase_F1/V1/A1_a/bsu_N_sf"/>
</dbReference>
<dbReference type="InterPro" id="IPR000194">
    <property type="entry name" value="ATPase_F1/V1/A1_a/bsu_nucl-bd"/>
</dbReference>
<dbReference type="InterPro" id="IPR027417">
    <property type="entry name" value="P-loop_NTPase"/>
</dbReference>
<dbReference type="NCBIfam" id="TIGR00962">
    <property type="entry name" value="atpA"/>
    <property type="match status" value="1"/>
</dbReference>
<dbReference type="NCBIfam" id="NF009884">
    <property type="entry name" value="PRK13343.1"/>
    <property type="match status" value="1"/>
</dbReference>
<dbReference type="PANTHER" id="PTHR48082">
    <property type="entry name" value="ATP SYNTHASE SUBUNIT ALPHA, MITOCHONDRIAL"/>
    <property type="match status" value="1"/>
</dbReference>
<dbReference type="PANTHER" id="PTHR48082:SF2">
    <property type="entry name" value="ATP SYNTHASE SUBUNIT ALPHA, MITOCHONDRIAL"/>
    <property type="match status" value="1"/>
</dbReference>
<dbReference type="Pfam" id="PF00006">
    <property type="entry name" value="ATP-synt_ab"/>
    <property type="match status" value="1"/>
</dbReference>
<dbReference type="Pfam" id="PF00306">
    <property type="entry name" value="ATP-synt_ab_C"/>
    <property type="match status" value="1"/>
</dbReference>
<dbReference type="Pfam" id="PF02874">
    <property type="entry name" value="ATP-synt_ab_N"/>
    <property type="match status" value="1"/>
</dbReference>
<dbReference type="SUPFAM" id="SSF47917">
    <property type="entry name" value="C-terminal domain of alpha and beta subunits of F1 ATP synthase"/>
    <property type="match status" value="1"/>
</dbReference>
<dbReference type="SUPFAM" id="SSF50615">
    <property type="entry name" value="N-terminal domain of alpha and beta subunits of F1 ATP synthase"/>
    <property type="match status" value="1"/>
</dbReference>
<dbReference type="SUPFAM" id="SSF52540">
    <property type="entry name" value="P-loop containing nucleoside triphosphate hydrolases"/>
    <property type="match status" value="1"/>
</dbReference>
<dbReference type="PROSITE" id="PS00152">
    <property type="entry name" value="ATPASE_ALPHA_BETA"/>
    <property type="match status" value="1"/>
</dbReference>
<protein>
    <recommendedName>
        <fullName evidence="1">ATP synthase subunit alpha</fullName>
        <ecNumber evidence="1">7.1.2.2</ecNumber>
    </recommendedName>
    <alternativeName>
        <fullName evidence="1">ATP synthase F1 sector subunit alpha</fullName>
    </alternativeName>
    <alternativeName>
        <fullName evidence="1">F-ATPase subunit alpha</fullName>
    </alternativeName>
</protein>
<keyword id="KW-0066">ATP synthesis</keyword>
<keyword id="KW-0067">ATP-binding</keyword>
<keyword id="KW-0997">Cell inner membrane</keyword>
<keyword id="KW-1003">Cell membrane</keyword>
<keyword id="KW-0139">CF(1)</keyword>
<keyword id="KW-0375">Hydrogen ion transport</keyword>
<keyword id="KW-0406">Ion transport</keyword>
<keyword id="KW-0472">Membrane</keyword>
<keyword id="KW-0547">Nucleotide-binding</keyword>
<keyword id="KW-1185">Reference proteome</keyword>
<keyword id="KW-1278">Translocase</keyword>
<keyword id="KW-0813">Transport</keyword>
<evidence type="ECO:0000255" key="1">
    <source>
        <dbReference type="HAMAP-Rule" id="MF_01346"/>
    </source>
</evidence>
<name>ATPA_VESOH</name>
<accession>A5CVI8</accession>